<organism>
    <name type="scientific">Saccharomyces cerevisiae (strain ATCC 204508 / S288c)</name>
    <name type="common">Baker's yeast</name>
    <dbReference type="NCBI Taxonomy" id="559292"/>
    <lineage>
        <taxon>Eukaryota</taxon>
        <taxon>Fungi</taxon>
        <taxon>Dikarya</taxon>
        <taxon>Ascomycota</taxon>
        <taxon>Saccharomycotina</taxon>
        <taxon>Saccharomycetes</taxon>
        <taxon>Saccharomycetales</taxon>
        <taxon>Saccharomycetaceae</taxon>
        <taxon>Saccharomyces</taxon>
    </lineage>
</organism>
<gene>
    <name type="primary">APL1</name>
    <name type="synonym">YAP80</name>
    <name type="ordered locus">YJR005W</name>
    <name type="ORF">J1422</name>
</gene>
<accession>P27351</accession>
<accession>D6VWH9</accession>
<dbReference type="EMBL" id="M64998">
    <property type="protein sequence ID" value="AAA35226.1"/>
    <property type="molecule type" value="Genomic_DNA"/>
</dbReference>
<dbReference type="EMBL" id="X87611">
    <property type="protein sequence ID" value="CAA60927.1"/>
    <property type="status" value="ALT_SEQ"/>
    <property type="molecule type" value="Genomic_DNA"/>
</dbReference>
<dbReference type="EMBL" id="Z49505">
    <property type="protein sequence ID" value="CAA89527.1"/>
    <property type="molecule type" value="Genomic_DNA"/>
</dbReference>
<dbReference type="EMBL" id="BK006943">
    <property type="protein sequence ID" value="DAA08795.1"/>
    <property type="molecule type" value="Genomic_DNA"/>
</dbReference>
<dbReference type="PIR" id="S57020">
    <property type="entry name" value="S57020"/>
</dbReference>
<dbReference type="RefSeq" id="NP_012538.3">
    <property type="nucleotide sequence ID" value="NM_001181662.3"/>
</dbReference>
<dbReference type="SMR" id="P27351"/>
<dbReference type="BioGRID" id="33761">
    <property type="interactions" value="108"/>
</dbReference>
<dbReference type="ComplexPortal" id="CPX-534">
    <property type="entry name" value="Adapter complex AP-2"/>
</dbReference>
<dbReference type="DIP" id="DIP-915N"/>
<dbReference type="FunCoup" id="P27351">
    <property type="interactions" value="143"/>
</dbReference>
<dbReference type="IntAct" id="P27351">
    <property type="interactions" value="7"/>
</dbReference>
<dbReference type="MINT" id="P27351"/>
<dbReference type="STRING" id="4932.YJR005W"/>
<dbReference type="iPTMnet" id="P27351"/>
<dbReference type="PaxDb" id="4932-YJR005W"/>
<dbReference type="PeptideAtlas" id="P27351"/>
<dbReference type="TopDownProteomics" id="P27351"/>
<dbReference type="EnsemblFungi" id="YJR005W_mRNA">
    <property type="protein sequence ID" value="YJR005W"/>
    <property type="gene ID" value="YJR005W"/>
</dbReference>
<dbReference type="GeneID" id="853461"/>
<dbReference type="KEGG" id="sce:YJR005W"/>
<dbReference type="AGR" id="SGD:S000003765"/>
<dbReference type="SGD" id="S000003765">
    <property type="gene designation" value="APL1"/>
</dbReference>
<dbReference type="VEuPathDB" id="FungiDB:YJR005W"/>
<dbReference type="eggNOG" id="KOG1061">
    <property type="taxonomic scope" value="Eukaryota"/>
</dbReference>
<dbReference type="HOGENOM" id="CLU_006320_4_4_1"/>
<dbReference type="InParanoid" id="P27351"/>
<dbReference type="OMA" id="RIFARYK"/>
<dbReference type="OrthoDB" id="10254310at2759"/>
<dbReference type="BioCyc" id="YEAST:G3O-31651-MONOMER"/>
<dbReference type="Reactome" id="R-SCE-437239">
    <property type="pathway name" value="Recycling pathway of L1"/>
</dbReference>
<dbReference type="Reactome" id="R-SCE-8856825">
    <property type="pathway name" value="Cargo recognition for clathrin-mediated endocytosis"/>
</dbReference>
<dbReference type="Reactome" id="R-SCE-8856828">
    <property type="pathway name" value="Clathrin-mediated endocytosis"/>
</dbReference>
<dbReference type="Reactome" id="R-SCE-8866427">
    <property type="pathway name" value="VLDLR internalisation and degradation"/>
</dbReference>
<dbReference type="Reactome" id="R-SCE-8964038">
    <property type="pathway name" value="LDL clearance"/>
</dbReference>
<dbReference type="BioGRID-ORCS" id="853461">
    <property type="hits" value="0 hits in 10 CRISPR screens"/>
</dbReference>
<dbReference type="PRO" id="PR:P27351"/>
<dbReference type="Proteomes" id="UP000002311">
    <property type="component" value="Chromosome X"/>
</dbReference>
<dbReference type="RNAct" id="P27351">
    <property type="molecule type" value="protein"/>
</dbReference>
<dbReference type="GO" id="GO:0030122">
    <property type="term" value="C:AP-2 adaptor complex"/>
    <property type="evidence" value="ECO:0000314"/>
    <property type="project" value="SGD"/>
</dbReference>
<dbReference type="GO" id="GO:0005935">
    <property type="term" value="C:cellular bud neck"/>
    <property type="evidence" value="ECO:0007005"/>
    <property type="project" value="SGD"/>
</dbReference>
<dbReference type="GO" id="GO:0030139">
    <property type="term" value="C:endocytic vesicle"/>
    <property type="evidence" value="ECO:0000314"/>
    <property type="project" value="SGD"/>
</dbReference>
<dbReference type="GO" id="GO:0030276">
    <property type="term" value="F:clathrin binding"/>
    <property type="evidence" value="ECO:0007669"/>
    <property type="project" value="InterPro"/>
</dbReference>
<dbReference type="GO" id="GO:0006897">
    <property type="term" value="P:endocytosis"/>
    <property type="evidence" value="ECO:0007669"/>
    <property type="project" value="UniProtKB-KW"/>
</dbReference>
<dbReference type="GO" id="GO:0006886">
    <property type="term" value="P:intracellular protein transport"/>
    <property type="evidence" value="ECO:0000303"/>
    <property type="project" value="ComplexPortal"/>
</dbReference>
<dbReference type="GO" id="GO:0016192">
    <property type="term" value="P:vesicle-mediated transport"/>
    <property type="evidence" value="ECO:0000305"/>
    <property type="project" value="SGD"/>
</dbReference>
<dbReference type="FunFam" id="1.25.10.10:FF:000557">
    <property type="entry name" value="AP complex subunit beta"/>
    <property type="match status" value="1"/>
</dbReference>
<dbReference type="Gene3D" id="1.25.10.10">
    <property type="entry name" value="Leucine-rich Repeat Variant"/>
    <property type="match status" value="1"/>
</dbReference>
<dbReference type="InterPro" id="IPR026739">
    <property type="entry name" value="AP_beta"/>
</dbReference>
<dbReference type="InterPro" id="IPR016342">
    <property type="entry name" value="AP_complex_bsu_1_2_4"/>
</dbReference>
<dbReference type="InterPro" id="IPR011989">
    <property type="entry name" value="ARM-like"/>
</dbReference>
<dbReference type="InterPro" id="IPR016024">
    <property type="entry name" value="ARM-type_fold"/>
</dbReference>
<dbReference type="InterPro" id="IPR002553">
    <property type="entry name" value="Clathrin/coatomer_adapt-like_N"/>
</dbReference>
<dbReference type="PANTHER" id="PTHR11134">
    <property type="entry name" value="ADAPTOR COMPLEX SUBUNIT BETA FAMILY MEMBER"/>
    <property type="match status" value="1"/>
</dbReference>
<dbReference type="Pfam" id="PF01602">
    <property type="entry name" value="Adaptin_N"/>
    <property type="match status" value="1"/>
</dbReference>
<dbReference type="PIRSF" id="PIRSF002291">
    <property type="entry name" value="AP_complex_beta"/>
    <property type="match status" value="1"/>
</dbReference>
<dbReference type="SUPFAM" id="SSF48371">
    <property type="entry name" value="ARM repeat"/>
    <property type="match status" value="1"/>
</dbReference>
<sequence length="700" mass="80453">MSDQKVFARYKANEIVTDLQHFGVKKFKSNITRRKNALRKIIANLVLGNYGEMSVLFSELLKFWQIEDDLEVKRICHEYIRVIGALKPQQAREALPFIMDDFKSRDEKLQIMALRTLVLVPVKELSDQAFDCIISLVNHKSPPEQVTRTAIYALLDLDEIDHERVLGLSSILHDIVKAQSSSPEVIVAALHTLYSIHEKNANMEPFRIPLELAFDMLELLPELNEWNKATVLEVLTTSVVPQHYLDTHEMIELALPYLQQVNTYVVLNSLKFIMYLLNYVDVIKETLAEKLSNSVIALLDKPPELQFLVLRNVILLLLSRESSLLRLDISYFFIEYNDPIYIKDTKLECLYLLANKETLPRILEELEQYATDIDIQMSRKSVRAIGNLAVKLDEDSVHDCVAVLLDLLEFGVDYVVQEIISVFRNILRKYPNNFKANVTELVKHTEVVQEPESKNAMIWIITQYSDVIPNYLELFRVFSSNMFSETLEVQFSILNSAIKFFIRSPTKETEELCMDLLKGCIDHENNPDLRDKTLMYWRLLSLTKTSRISNAITFESLKSVLDGELPLIEMNTKLDPTVLEELELNIGTIVSIYLKPVSHIFRLNKTKLLPQSPILNPNKDLLPVVGNSFPPTGANRDRQNSESQSSTKSRKTAMMDDYDKPAEKINQLKGKRKSSSNNPSKLSRKPSTLLRKLSMKRPFS</sequence>
<protein>
    <recommendedName>
        <fullName>AP-2 complex subunit beta</fullName>
    </recommendedName>
    <alternativeName>
        <fullName>Beta-2-adaptin</fullName>
    </alternativeName>
    <alternativeName>
        <fullName>Beta-adaptin</fullName>
    </alternativeName>
    <alternativeName>
        <fullName>Clathrin assembly protein complex 2 beta large chain</fullName>
    </alternativeName>
    <alternativeName>
        <fullName>Clathrin assembly protein large beta chain</fullName>
    </alternativeName>
</protein>
<proteinExistence type="evidence at protein level"/>
<feature type="chain" id="PRO_0000193755" description="AP-2 complex subunit beta">
    <location>
        <begin position="1"/>
        <end position="700"/>
    </location>
</feature>
<feature type="region of interest" description="Disordered" evidence="1">
    <location>
        <begin position="625"/>
        <end position="700"/>
    </location>
</feature>
<feature type="compositionally biased region" description="Basic and acidic residues" evidence="1">
    <location>
        <begin position="653"/>
        <end position="663"/>
    </location>
</feature>
<feature type="modified residue" description="Phosphoserine" evidence="5">
    <location>
        <position position="649"/>
    </location>
</feature>
<feature type="modified residue" description="Phosphothreonine" evidence="5">
    <location>
        <position position="652"/>
    </location>
</feature>
<feature type="modified residue" description="Phosphoserine" evidence="5">
    <location>
        <position position="683"/>
    </location>
</feature>
<feature type="sequence conflict" description="In Ref. 1; AAA35226." evidence="4" ref="1">
    <original>V</original>
    <variation>L</variation>
    <location>
        <position position="55"/>
    </location>
</feature>
<feature type="sequence conflict" description="In Ref. 1; AAA35226." evidence="4" ref="1">
    <original>S</original>
    <variation>N</variation>
    <location>
        <position position="484"/>
    </location>
</feature>
<feature type="sequence conflict" description="In Ref. 1; AAA35226." evidence="4" ref="1">
    <original>S</original>
    <variation>N</variation>
    <location>
        <position position="504"/>
    </location>
</feature>
<feature type="sequence conflict" description="In Ref. 1; AAA35226." evidence="4" ref="1">
    <original>I</original>
    <variation>T</variation>
    <location>
        <position position="521"/>
    </location>
</feature>
<feature type="sequence conflict" description="In Ref. 1; AAA35226." evidence="4" ref="1">
    <original>F</original>
    <variation>I</variation>
    <location>
        <position position="629"/>
    </location>
</feature>
<name>AP2B_YEAST</name>
<reference key="1">
    <citation type="journal article" date="1990" name="Mol. Cell. Biol.">
        <title>Identification of a putative yeast homolog of the mammalian beta chains of the clathrin-associated protein complexes.</title>
        <authorList>
            <person name="Kirchhausen T."/>
        </authorList>
    </citation>
    <scope>NUCLEOTIDE SEQUENCE [GENOMIC DNA]</scope>
</reference>
<reference key="2">
    <citation type="journal article" date="1996" name="EMBO J.">
        <title>Complete nucleotide sequence of Saccharomyces cerevisiae chromosome X.</title>
        <authorList>
            <person name="Galibert F."/>
            <person name="Alexandraki D."/>
            <person name="Baur A."/>
            <person name="Boles E."/>
            <person name="Chalwatzis N."/>
            <person name="Chuat J.-C."/>
            <person name="Coster F."/>
            <person name="Cziepluch C."/>
            <person name="de Haan M."/>
            <person name="Domdey H."/>
            <person name="Durand P."/>
            <person name="Entian K.-D."/>
            <person name="Gatius M."/>
            <person name="Goffeau A."/>
            <person name="Grivell L.A."/>
            <person name="Hennemann A."/>
            <person name="Herbert C.J."/>
            <person name="Heumann K."/>
            <person name="Hilger F."/>
            <person name="Hollenberg C.P."/>
            <person name="Huang M.-E."/>
            <person name="Jacq C."/>
            <person name="Jauniaux J.-C."/>
            <person name="Katsoulou C."/>
            <person name="Kirchrath L."/>
            <person name="Kleine K."/>
            <person name="Kordes E."/>
            <person name="Koetter P."/>
            <person name="Liebl S."/>
            <person name="Louis E.J."/>
            <person name="Manus V."/>
            <person name="Mewes H.-W."/>
            <person name="Miosga T."/>
            <person name="Obermaier B."/>
            <person name="Perea J."/>
            <person name="Pohl T.M."/>
            <person name="Portetelle D."/>
            <person name="Pujol A."/>
            <person name="Purnelle B."/>
            <person name="Ramezani Rad M."/>
            <person name="Rasmussen S.W."/>
            <person name="Rose M."/>
            <person name="Rossau R."/>
            <person name="Schaaff-Gerstenschlaeger I."/>
            <person name="Smits P.H.M."/>
            <person name="Scarcez T."/>
            <person name="Soriano N."/>
            <person name="To Van D."/>
            <person name="Tzermia M."/>
            <person name="Van Broekhoven A."/>
            <person name="Vandenbol M."/>
            <person name="Wedler H."/>
            <person name="von Wettstein D."/>
            <person name="Wambutt R."/>
            <person name="Zagulski M."/>
            <person name="Zollner A."/>
            <person name="Karpfinger-Hartl L."/>
        </authorList>
    </citation>
    <scope>NUCLEOTIDE SEQUENCE [LARGE SCALE GENOMIC DNA]</scope>
    <source>
        <strain>ATCC 204508 / S288c</strain>
    </source>
</reference>
<reference key="3">
    <citation type="journal article" date="2014" name="G3 (Bethesda)">
        <title>The reference genome sequence of Saccharomyces cerevisiae: Then and now.</title>
        <authorList>
            <person name="Engel S.R."/>
            <person name="Dietrich F.S."/>
            <person name="Fisk D.G."/>
            <person name="Binkley G."/>
            <person name="Balakrishnan R."/>
            <person name="Costanzo M.C."/>
            <person name="Dwight S.S."/>
            <person name="Hitz B.C."/>
            <person name="Karra K."/>
            <person name="Nash R.S."/>
            <person name="Weng S."/>
            <person name="Wong E.D."/>
            <person name="Lloyd P."/>
            <person name="Skrzypek M.S."/>
            <person name="Miyasato S.R."/>
            <person name="Simison M."/>
            <person name="Cherry J.M."/>
        </authorList>
    </citation>
    <scope>GENOME REANNOTATION</scope>
    <source>
        <strain>ATCC 204508 / S288c</strain>
    </source>
</reference>
<reference key="4">
    <citation type="journal article" date="1999" name="Mol. Biol. Cell">
        <title>Adaptor complex-independent clathrin function in yeast.</title>
        <authorList>
            <person name="Yeung B.G."/>
            <person name="Phan H.L."/>
            <person name="Payne G.S."/>
        </authorList>
    </citation>
    <scope>FUNCTION</scope>
    <scope>SUBUNIT</scope>
    <scope>INTERACTION WITH APS2</scope>
</reference>
<reference key="5">
    <citation type="journal article" date="2003" name="Nature">
        <title>Global analysis of protein expression in yeast.</title>
        <authorList>
            <person name="Ghaemmaghami S."/>
            <person name="Huh W.-K."/>
            <person name="Bower K."/>
            <person name="Howson R.W."/>
            <person name="Belle A."/>
            <person name="Dephoure N."/>
            <person name="O'Shea E.K."/>
            <person name="Weissman J.S."/>
        </authorList>
    </citation>
    <scope>LEVEL OF PROTEIN EXPRESSION [LARGE SCALE ANALYSIS]</scope>
</reference>
<reference key="6">
    <citation type="journal article" date="2007" name="Proc. Natl. Acad. Sci. U.S.A.">
        <title>Analysis of phosphorylation sites on proteins from Saccharomyces cerevisiae by electron transfer dissociation (ETD) mass spectrometry.</title>
        <authorList>
            <person name="Chi A."/>
            <person name="Huttenhower C."/>
            <person name="Geer L.Y."/>
            <person name="Coon J.J."/>
            <person name="Syka J.E.P."/>
            <person name="Bai D.L."/>
            <person name="Shabanowitz J."/>
            <person name="Burke D.J."/>
            <person name="Troyanskaya O.G."/>
            <person name="Hunt D.F."/>
        </authorList>
    </citation>
    <scope>PHOSPHORYLATION [LARGE SCALE ANALYSIS] AT SER-649; THR-652 AND SER-683</scope>
    <scope>IDENTIFICATION BY MASS SPECTROMETRY [LARGE SCALE ANALYSIS]</scope>
</reference>
<keyword id="KW-1003">Cell membrane</keyword>
<keyword id="KW-0168">Coated pit</keyword>
<keyword id="KW-0254">Endocytosis</keyword>
<keyword id="KW-0472">Membrane</keyword>
<keyword id="KW-0597">Phosphoprotein</keyword>
<keyword id="KW-0653">Protein transport</keyword>
<keyword id="KW-1185">Reference proteome</keyword>
<keyword id="KW-0813">Transport</keyword>
<evidence type="ECO:0000256" key="1">
    <source>
        <dbReference type="SAM" id="MobiDB-lite"/>
    </source>
</evidence>
<evidence type="ECO:0000269" key="2">
    <source>
    </source>
</evidence>
<evidence type="ECO:0000269" key="3">
    <source>
    </source>
</evidence>
<evidence type="ECO:0000305" key="4"/>
<evidence type="ECO:0007744" key="5">
    <source>
    </source>
</evidence>
<comment type="function">
    <text evidence="2">Adaptins are components of the adaptor complexes which link clathrin to receptors in coated vesicles. Clathrin-associated protein complexes are believed to interact with the cytoplasmic tails of membrane proteins, leading to their selection and concentration. Beta adaptin is a subunit of the plasma membrane adaptor.</text>
</comment>
<comment type="subunit">
    <text evidence="2">Adaptor protein complex 2 (AP-2) is a heterotetramer composed of two large adaptins (alpha-type subunit APL3 and beta-type subunit APL1), a medium chain (mu-type subunit APM4) and a small adaptin (sigma-type subunit APS2). Interacts with APS2.</text>
</comment>
<comment type="subcellular location">
    <subcellularLocation>
        <location>Cell membrane</location>
    </subcellularLocation>
    <subcellularLocation>
        <location>Membrane</location>
        <location>Coated pit</location>
        <topology>Peripheral membrane protein</topology>
        <orientation>Cytoplasmic side</orientation>
    </subcellularLocation>
    <text>Component of the coat surrounding the cytoplasmic face of coated vesicles in the plasma membrane.</text>
</comment>
<comment type="miscellaneous">
    <text evidence="3">Present with 1670 molecules/cell in log phase SD medium.</text>
</comment>
<comment type="similarity">
    <text evidence="4">Belongs to the adaptor complexes large subunit family.</text>
</comment>